<comment type="catalytic activity">
    <reaction evidence="1">
        <text>L-citrulline + L-aspartate + ATP = 2-(N(omega)-L-arginino)succinate + AMP + diphosphate + H(+)</text>
        <dbReference type="Rhea" id="RHEA:10932"/>
        <dbReference type="ChEBI" id="CHEBI:15378"/>
        <dbReference type="ChEBI" id="CHEBI:29991"/>
        <dbReference type="ChEBI" id="CHEBI:30616"/>
        <dbReference type="ChEBI" id="CHEBI:33019"/>
        <dbReference type="ChEBI" id="CHEBI:57472"/>
        <dbReference type="ChEBI" id="CHEBI:57743"/>
        <dbReference type="ChEBI" id="CHEBI:456215"/>
        <dbReference type="EC" id="6.3.4.5"/>
    </reaction>
</comment>
<comment type="pathway">
    <text evidence="1">Amino-acid biosynthesis; L-arginine biosynthesis; L-arginine from L-ornithine and carbamoyl phosphate: step 2/3.</text>
</comment>
<comment type="subunit">
    <text evidence="1">Homotetramer.</text>
</comment>
<comment type="subcellular location">
    <subcellularLocation>
        <location evidence="1">Cytoplasm</location>
    </subcellularLocation>
</comment>
<comment type="similarity">
    <text evidence="1">Belongs to the argininosuccinate synthase family. Type 1 subfamily.</text>
</comment>
<reference key="1">
    <citation type="journal article" date="2002" name="Genome Res.">
        <title>A complete sequence of the T. tengcongensis genome.</title>
        <authorList>
            <person name="Bao Q."/>
            <person name="Tian Y."/>
            <person name="Li W."/>
            <person name="Xu Z."/>
            <person name="Xuan Z."/>
            <person name="Hu S."/>
            <person name="Dong W."/>
            <person name="Yang J."/>
            <person name="Chen Y."/>
            <person name="Xue Y."/>
            <person name="Xu Y."/>
            <person name="Lai X."/>
            <person name="Huang L."/>
            <person name="Dong X."/>
            <person name="Ma Y."/>
            <person name="Ling L."/>
            <person name="Tan H."/>
            <person name="Chen R."/>
            <person name="Wang J."/>
            <person name="Yu J."/>
            <person name="Yang H."/>
        </authorList>
    </citation>
    <scope>NUCLEOTIDE SEQUENCE [LARGE SCALE GENOMIC DNA]</scope>
    <source>
        <strain>DSM 15242 / JCM 11007 / NBRC 100824 / MB4</strain>
    </source>
</reference>
<organism>
    <name type="scientific">Caldanaerobacter subterraneus subsp. tengcongensis (strain DSM 15242 / JCM 11007 / NBRC 100824 / MB4)</name>
    <name type="common">Thermoanaerobacter tengcongensis</name>
    <dbReference type="NCBI Taxonomy" id="273068"/>
    <lineage>
        <taxon>Bacteria</taxon>
        <taxon>Bacillati</taxon>
        <taxon>Bacillota</taxon>
        <taxon>Clostridia</taxon>
        <taxon>Thermoanaerobacterales</taxon>
        <taxon>Thermoanaerobacteraceae</taxon>
        <taxon>Caldanaerobacter</taxon>
    </lineage>
</organism>
<protein>
    <recommendedName>
        <fullName evidence="1">Argininosuccinate synthase</fullName>
        <ecNumber evidence="1">6.3.4.5</ecNumber>
    </recommendedName>
    <alternativeName>
        <fullName evidence="1">Citrulline--aspartate ligase</fullName>
    </alternativeName>
</protein>
<feature type="chain" id="PRO_0000148659" description="Argininosuccinate synthase">
    <location>
        <begin position="1"/>
        <end position="410"/>
    </location>
</feature>
<feature type="binding site" evidence="1">
    <location>
        <begin position="10"/>
        <end position="18"/>
    </location>
    <ligand>
        <name>ATP</name>
        <dbReference type="ChEBI" id="CHEBI:30616"/>
    </ligand>
</feature>
<feature type="binding site" evidence="1">
    <location>
        <position position="88"/>
    </location>
    <ligand>
        <name>L-citrulline</name>
        <dbReference type="ChEBI" id="CHEBI:57743"/>
    </ligand>
</feature>
<feature type="binding site" evidence="1">
    <location>
        <position position="93"/>
    </location>
    <ligand>
        <name>L-citrulline</name>
        <dbReference type="ChEBI" id="CHEBI:57743"/>
    </ligand>
</feature>
<feature type="binding site" evidence="1">
    <location>
        <position position="118"/>
    </location>
    <ligand>
        <name>ATP</name>
        <dbReference type="ChEBI" id="CHEBI:30616"/>
    </ligand>
</feature>
<feature type="binding site" evidence="1">
    <location>
        <position position="120"/>
    </location>
    <ligand>
        <name>L-aspartate</name>
        <dbReference type="ChEBI" id="CHEBI:29991"/>
    </ligand>
</feature>
<feature type="binding site" evidence="1">
    <location>
        <position position="124"/>
    </location>
    <ligand>
        <name>L-aspartate</name>
        <dbReference type="ChEBI" id="CHEBI:29991"/>
    </ligand>
</feature>
<feature type="binding site" evidence="1">
    <location>
        <position position="124"/>
    </location>
    <ligand>
        <name>L-citrulline</name>
        <dbReference type="ChEBI" id="CHEBI:57743"/>
    </ligand>
</feature>
<feature type="binding site" evidence="1">
    <location>
        <position position="125"/>
    </location>
    <ligand>
        <name>L-aspartate</name>
        <dbReference type="ChEBI" id="CHEBI:29991"/>
    </ligand>
</feature>
<feature type="binding site" evidence="1">
    <location>
        <position position="128"/>
    </location>
    <ligand>
        <name>L-citrulline</name>
        <dbReference type="ChEBI" id="CHEBI:57743"/>
    </ligand>
</feature>
<feature type="binding site" evidence="1">
    <location>
        <position position="177"/>
    </location>
    <ligand>
        <name>L-citrulline</name>
        <dbReference type="ChEBI" id="CHEBI:57743"/>
    </ligand>
</feature>
<feature type="binding site" evidence="1">
    <location>
        <position position="186"/>
    </location>
    <ligand>
        <name>L-citrulline</name>
        <dbReference type="ChEBI" id="CHEBI:57743"/>
    </ligand>
</feature>
<feature type="binding site" evidence="1">
    <location>
        <position position="262"/>
    </location>
    <ligand>
        <name>L-citrulline</name>
        <dbReference type="ChEBI" id="CHEBI:57743"/>
    </ligand>
</feature>
<feature type="binding site" evidence="1">
    <location>
        <position position="274"/>
    </location>
    <ligand>
        <name>L-citrulline</name>
        <dbReference type="ChEBI" id="CHEBI:57743"/>
    </ligand>
</feature>
<dbReference type="EC" id="6.3.4.5" evidence="1"/>
<dbReference type="EMBL" id="AE008691">
    <property type="protein sequence ID" value="AAM25624.1"/>
    <property type="molecule type" value="Genomic_DNA"/>
</dbReference>
<dbReference type="RefSeq" id="WP_011026508.1">
    <property type="nucleotide sequence ID" value="NC_003869.1"/>
</dbReference>
<dbReference type="SMR" id="Q8R7C2"/>
<dbReference type="STRING" id="273068.TTE2494"/>
<dbReference type="KEGG" id="tte:TTE2494"/>
<dbReference type="eggNOG" id="COG0137">
    <property type="taxonomic scope" value="Bacteria"/>
</dbReference>
<dbReference type="HOGENOM" id="CLU_032784_4_2_9"/>
<dbReference type="OrthoDB" id="9801641at2"/>
<dbReference type="UniPathway" id="UPA00068">
    <property type="reaction ID" value="UER00113"/>
</dbReference>
<dbReference type="Proteomes" id="UP000000555">
    <property type="component" value="Chromosome"/>
</dbReference>
<dbReference type="GO" id="GO:0005737">
    <property type="term" value="C:cytoplasm"/>
    <property type="evidence" value="ECO:0007669"/>
    <property type="project" value="UniProtKB-SubCell"/>
</dbReference>
<dbReference type="GO" id="GO:0004055">
    <property type="term" value="F:argininosuccinate synthase activity"/>
    <property type="evidence" value="ECO:0007669"/>
    <property type="project" value="UniProtKB-UniRule"/>
</dbReference>
<dbReference type="GO" id="GO:0005524">
    <property type="term" value="F:ATP binding"/>
    <property type="evidence" value="ECO:0007669"/>
    <property type="project" value="UniProtKB-UniRule"/>
</dbReference>
<dbReference type="GO" id="GO:0000053">
    <property type="term" value="P:argininosuccinate metabolic process"/>
    <property type="evidence" value="ECO:0007669"/>
    <property type="project" value="TreeGrafter"/>
</dbReference>
<dbReference type="GO" id="GO:0006526">
    <property type="term" value="P:L-arginine biosynthetic process"/>
    <property type="evidence" value="ECO:0007669"/>
    <property type="project" value="UniProtKB-UniRule"/>
</dbReference>
<dbReference type="GO" id="GO:0000050">
    <property type="term" value="P:urea cycle"/>
    <property type="evidence" value="ECO:0007669"/>
    <property type="project" value="TreeGrafter"/>
</dbReference>
<dbReference type="CDD" id="cd01999">
    <property type="entry name" value="ASS"/>
    <property type="match status" value="1"/>
</dbReference>
<dbReference type="FunFam" id="3.40.50.620:FF:000019">
    <property type="entry name" value="Argininosuccinate synthase"/>
    <property type="match status" value="1"/>
</dbReference>
<dbReference type="FunFam" id="3.90.1260.10:FF:000007">
    <property type="entry name" value="Argininosuccinate synthase"/>
    <property type="match status" value="1"/>
</dbReference>
<dbReference type="Gene3D" id="3.90.1260.10">
    <property type="entry name" value="Argininosuccinate synthetase, chain A, domain 2"/>
    <property type="match status" value="1"/>
</dbReference>
<dbReference type="Gene3D" id="3.40.50.620">
    <property type="entry name" value="HUPs"/>
    <property type="match status" value="1"/>
</dbReference>
<dbReference type="Gene3D" id="1.20.5.470">
    <property type="entry name" value="Single helix bin"/>
    <property type="match status" value="1"/>
</dbReference>
<dbReference type="HAMAP" id="MF_00005">
    <property type="entry name" value="Arg_succ_synth_type1"/>
    <property type="match status" value="1"/>
</dbReference>
<dbReference type="InterPro" id="IPR048268">
    <property type="entry name" value="Arginosuc_syn_C"/>
</dbReference>
<dbReference type="InterPro" id="IPR048267">
    <property type="entry name" value="Arginosuc_syn_N"/>
</dbReference>
<dbReference type="InterPro" id="IPR001518">
    <property type="entry name" value="Arginosuc_synth"/>
</dbReference>
<dbReference type="InterPro" id="IPR018223">
    <property type="entry name" value="Arginosuc_synth_CS"/>
</dbReference>
<dbReference type="InterPro" id="IPR023434">
    <property type="entry name" value="Arginosuc_synth_type_1_subfam"/>
</dbReference>
<dbReference type="InterPro" id="IPR024074">
    <property type="entry name" value="AS_cat/multimer_dom_body"/>
</dbReference>
<dbReference type="InterPro" id="IPR014729">
    <property type="entry name" value="Rossmann-like_a/b/a_fold"/>
</dbReference>
<dbReference type="NCBIfam" id="TIGR00032">
    <property type="entry name" value="argG"/>
    <property type="match status" value="1"/>
</dbReference>
<dbReference type="NCBIfam" id="NF001770">
    <property type="entry name" value="PRK00509.1"/>
    <property type="match status" value="1"/>
</dbReference>
<dbReference type="PANTHER" id="PTHR11587">
    <property type="entry name" value="ARGININOSUCCINATE SYNTHASE"/>
    <property type="match status" value="1"/>
</dbReference>
<dbReference type="PANTHER" id="PTHR11587:SF2">
    <property type="entry name" value="ARGININOSUCCINATE SYNTHASE"/>
    <property type="match status" value="1"/>
</dbReference>
<dbReference type="Pfam" id="PF20979">
    <property type="entry name" value="Arginosuc_syn_C"/>
    <property type="match status" value="1"/>
</dbReference>
<dbReference type="Pfam" id="PF00764">
    <property type="entry name" value="Arginosuc_synth"/>
    <property type="match status" value="1"/>
</dbReference>
<dbReference type="SUPFAM" id="SSF52402">
    <property type="entry name" value="Adenine nucleotide alpha hydrolases-like"/>
    <property type="match status" value="1"/>
</dbReference>
<dbReference type="SUPFAM" id="SSF69864">
    <property type="entry name" value="Argininosuccinate synthetase, C-terminal domain"/>
    <property type="match status" value="1"/>
</dbReference>
<dbReference type="PROSITE" id="PS00564">
    <property type="entry name" value="ARGININOSUCCIN_SYN_1"/>
    <property type="match status" value="1"/>
</dbReference>
<dbReference type="PROSITE" id="PS00565">
    <property type="entry name" value="ARGININOSUCCIN_SYN_2"/>
    <property type="match status" value="1"/>
</dbReference>
<sequence>MLKGEKVVLAYSGGLDTSVIIPWLKENYECEIIAVCVDVGQREDLRYIKDKALASGASKVYIEDVKEEFVKDYIFPTLKAGAIYEGKYLLGTSMARPLIAKKLVEIAHKEGAKAIAHGATGKGNDQVRFEVSIRALDPSIKIIAPWRIWELKSREDEIEYAKKKGIPIPVTKEKIYSVDSNLWHVSHEGGDLEDPWNEPKSDIYDIVTPPEKVSDKPEYVYIEFEKGIPVKVNGKTLSPVKLIEELNEIGGRNGVGIVDLVENRLVGMKSRGVYETPAGTLLYIAHRELEYLVLDKETMRFKELVAQKYADLVYNGLWFSPLKTALDAFIDETQKNVTGVVRLKLYKGNVINAGAKSPYSLYNEEFATFGKDEVYNQKDAEGFINLFGLSLKIRALMEMGRKDMDEAVGR</sequence>
<proteinExistence type="inferred from homology"/>
<name>ASSY_CALS4</name>
<evidence type="ECO:0000255" key="1">
    <source>
        <dbReference type="HAMAP-Rule" id="MF_00005"/>
    </source>
</evidence>
<gene>
    <name evidence="1" type="primary">argG</name>
    <name type="ordered locus">TTE2494</name>
</gene>
<keyword id="KW-0028">Amino-acid biosynthesis</keyword>
<keyword id="KW-0055">Arginine biosynthesis</keyword>
<keyword id="KW-0067">ATP-binding</keyword>
<keyword id="KW-0963">Cytoplasm</keyword>
<keyword id="KW-0436">Ligase</keyword>
<keyword id="KW-0547">Nucleotide-binding</keyword>
<keyword id="KW-1185">Reference proteome</keyword>
<accession>Q8R7C2</accession>